<proteinExistence type="inferred from homology"/>
<feature type="chain" id="PRO_1000021859" description="Homoserine O-succinyltransferase">
    <location>
        <begin position="1"/>
        <end position="313"/>
    </location>
</feature>
<feature type="active site" description="Acyl-thioester intermediate" evidence="1">
    <location>
        <position position="142"/>
    </location>
</feature>
<feature type="active site" description="Proton acceptor" evidence="1">
    <location>
        <position position="235"/>
    </location>
</feature>
<feature type="active site" evidence="1">
    <location>
        <position position="237"/>
    </location>
</feature>
<feature type="binding site" evidence="1">
    <location>
        <position position="163"/>
    </location>
    <ligand>
        <name>substrate</name>
    </ligand>
</feature>
<feature type="binding site" evidence="1">
    <location>
        <position position="192"/>
    </location>
    <ligand>
        <name>substrate</name>
    </ligand>
</feature>
<feature type="binding site" evidence="1">
    <location>
        <position position="249"/>
    </location>
    <ligand>
        <name>substrate</name>
    </ligand>
</feature>
<feature type="site" description="Important for acyl-CoA specificity" evidence="1">
    <location>
        <position position="111"/>
    </location>
</feature>
<feature type="site" description="Important for substrate specificity" evidence="1">
    <location>
        <position position="192"/>
    </location>
</feature>
<organism>
    <name type="scientific">Vibrio campbellii (strain ATCC BAA-1116)</name>
    <dbReference type="NCBI Taxonomy" id="2902295"/>
    <lineage>
        <taxon>Bacteria</taxon>
        <taxon>Pseudomonadati</taxon>
        <taxon>Pseudomonadota</taxon>
        <taxon>Gammaproteobacteria</taxon>
        <taxon>Vibrionales</taxon>
        <taxon>Vibrionaceae</taxon>
        <taxon>Vibrio</taxon>
    </lineage>
</organism>
<name>METAS_VIBC1</name>
<dbReference type="EC" id="2.3.1.46" evidence="1"/>
<dbReference type="EMBL" id="CP000789">
    <property type="protein sequence ID" value="ABU71453.1"/>
    <property type="molecule type" value="Genomic_DNA"/>
</dbReference>
<dbReference type="SMR" id="A7N0F0"/>
<dbReference type="KEGG" id="vha:VIBHAR_02491"/>
<dbReference type="PATRIC" id="fig|338187.25.peg.209"/>
<dbReference type="UniPathway" id="UPA00051">
    <property type="reaction ID" value="UER00075"/>
</dbReference>
<dbReference type="Proteomes" id="UP000008152">
    <property type="component" value="Chromosome I"/>
</dbReference>
<dbReference type="GO" id="GO:0005737">
    <property type="term" value="C:cytoplasm"/>
    <property type="evidence" value="ECO:0007669"/>
    <property type="project" value="UniProtKB-SubCell"/>
</dbReference>
<dbReference type="GO" id="GO:0004414">
    <property type="term" value="F:homoserine O-acetyltransferase activity"/>
    <property type="evidence" value="ECO:0007669"/>
    <property type="project" value="UniProtKB-UniRule"/>
</dbReference>
<dbReference type="GO" id="GO:0008899">
    <property type="term" value="F:homoserine O-succinyltransferase activity"/>
    <property type="evidence" value="ECO:0007669"/>
    <property type="project" value="UniProtKB-EC"/>
</dbReference>
<dbReference type="GO" id="GO:0019281">
    <property type="term" value="P:L-methionine biosynthetic process from homoserine via O-succinyl-L-homoserine and cystathionine"/>
    <property type="evidence" value="ECO:0007669"/>
    <property type="project" value="InterPro"/>
</dbReference>
<dbReference type="CDD" id="cd03131">
    <property type="entry name" value="GATase1_HTS"/>
    <property type="match status" value="1"/>
</dbReference>
<dbReference type="FunFam" id="3.40.50.880:FF:000004">
    <property type="entry name" value="Homoserine O-succinyltransferase"/>
    <property type="match status" value="1"/>
</dbReference>
<dbReference type="Gene3D" id="3.40.50.880">
    <property type="match status" value="1"/>
</dbReference>
<dbReference type="HAMAP" id="MF_00295">
    <property type="entry name" value="MetA_acyltransf"/>
    <property type="match status" value="1"/>
</dbReference>
<dbReference type="InterPro" id="IPR029062">
    <property type="entry name" value="Class_I_gatase-like"/>
</dbReference>
<dbReference type="InterPro" id="IPR005697">
    <property type="entry name" value="HST_MetA"/>
</dbReference>
<dbReference type="InterPro" id="IPR033752">
    <property type="entry name" value="MetA_family"/>
</dbReference>
<dbReference type="NCBIfam" id="TIGR01001">
    <property type="entry name" value="metA"/>
    <property type="match status" value="1"/>
</dbReference>
<dbReference type="PANTHER" id="PTHR20919">
    <property type="entry name" value="HOMOSERINE O-SUCCINYLTRANSFERASE"/>
    <property type="match status" value="1"/>
</dbReference>
<dbReference type="PANTHER" id="PTHR20919:SF0">
    <property type="entry name" value="HOMOSERINE O-SUCCINYLTRANSFERASE"/>
    <property type="match status" value="1"/>
</dbReference>
<dbReference type="Pfam" id="PF04204">
    <property type="entry name" value="HTS"/>
    <property type="match status" value="1"/>
</dbReference>
<dbReference type="PIRSF" id="PIRSF000450">
    <property type="entry name" value="H_ser_succinyltr"/>
    <property type="match status" value="1"/>
</dbReference>
<dbReference type="SUPFAM" id="SSF52317">
    <property type="entry name" value="Class I glutamine amidotransferase-like"/>
    <property type="match status" value="1"/>
</dbReference>
<evidence type="ECO:0000255" key="1">
    <source>
        <dbReference type="HAMAP-Rule" id="MF_00295"/>
    </source>
</evidence>
<comment type="function">
    <text evidence="1">Transfers a succinyl group from succinyl-CoA to L-homoserine, forming succinyl-L-homoserine.</text>
</comment>
<comment type="catalytic activity">
    <reaction evidence="1">
        <text>L-homoserine + succinyl-CoA = O-succinyl-L-homoserine + CoA</text>
        <dbReference type="Rhea" id="RHEA:22008"/>
        <dbReference type="ChEBI" id="CHEBI:57287"/>
        <dbReference type="ChEBI" id="CHEBI:57292"/>
        <dbReference type="ChEBI" id="CHEBI:57476"/>
        <dbReference type="ChEBI" id="CHEBI:57661"/>
        <dbReference type="EC" id="2.3.1.46"/>
    </reaction>
</comment>
<comment type="pathway">
    <text evidence="1">Amino-acid biosynthesis; L-methionine biosynthesis via de novo pathway; O-succinyl-L-homoserine from L-homoserine: step 1/1.</text>
</comment>
<comment type="subcellular location">
    <subcellularLocation>
        <location evidence="1">Cytoplasm</location>
    </subcellularLocation>
</comment>
<comment type="similarity">
    <text evidence="1">Belongs to the MetA family.</text>
</comment>
<protein>
    <recommendedName>
        <fullName evidence="1">Homoserine O-succinyltransferase</fullName>
        <shortName evidence="1">HST</shortName>
        <ecNumber evidence="1">2.3.1.46</ecNumber>
    </recommendedName>
    <alternativeName>
        <fullName evidence="1">Homoserine transsuccinylase</fullName>
        <shortName evidence="1">HTS</shortName>
    </alternativeName>
</protein>
<reference key="1">
    <citation type="submission" date="2007-08" db="EMBL/GenBank/DDBJ databases">
        <authorList>
            <consortium name="The Vibrio harveyi Genome Sequencing Project"/>
            <person name="Bassler B."/>
            <person name="Clifton S.W."/>
            <person name="Fulton L."/>
            <person name="Delehaunty K."/>
            <person name="Fronick C."/>
            <person name="Harrison M."/>
            <person name="Markivic C."/>
            <person name="Fulton R."/>
            <person name="Tin-Wollam A.-M."/>
            <person name="Shah N."/>
            <person name="Pepin K."/>
            <person name="Nash W."/>
            <person name="Thiruvilangam P."/>
            <person name="Bhonagiri V."/>
            <person name="Waters C."/>
            <person name="Tu K.C."/>
            <person name="Irgon J."/>
            <person name="Wilson R.K."/>
        </authorList>
    </citation>
    <scope>NUCLEOTIDE SEQUENCE [LARGE SCALE GENOMIC DNA]</scope>
    <source>
        <strain>ATCC BAA-1116 / BB120</strain>
    </source>
</reference>
<keyword id="KW-0012">Acyltransferase</keyword>
<keyword id="KW-0028">Amino-acid biosynthesis</keyword>
<keyword id="KW-0963">Cytoplasm</keyword>
<keyword id="KW-0486">Methionine biosynthesis</keyword>
<keyword id="KW-0808">Transferase</keyword>
<gene>
    <name evidence="1" type="primary">metAS</name>
    <name type="ordered locus">VIBHAR_02491</name>
</gene>
<sequence>MPIRIPDQLPASDVLRTENIFVMSESRAASQEIRPLRVLILNLMPKKIETETQFLRLLSNSPLQVNVELLRIDNRPSKNTPTEHLDTFYRQFEMVKGKNFDGLIITGAPLGLVQFEDVIYWDHLKTIMEWAKHHVTSTLYVCWAAQAGLKLLYNLPKKTRKEKLSGVYHHKIHHQYHPLLRGFDDTFLAPHSRYADFSPEFLEEHTDLDILATSDVAGTYLATTKDKRNVFVTGHPEYDSHTLHNEYIRDLGEGMEPAIPINYYPNNNPDNPPCASWRSHGHLLFSNWLNYCVYQQTPYDLDHFSEDAFTKDD</sequence>
<accession>A7N0F0</accession>